<gene>
    <name evidence="1" type="primary">gcvH</name>
    <name type="ordered locus">Cvib_1405</name>
</gene>
<dbReference type="EMBL" id="CP000607">
    <property type="protein sequence ID" value="ABP37416.1"/>
    <property type="molecule type" value="Genomic_DNA"/>
</dbReference>
<dbReference type="SMR" id="A4SG07"/>
<dbReference type="STRING" id="290318.Cvib_1405"/>
<dbReference type="KEGG" id="pvi:Cvib_1405"/>
<dbReference type="eggNOG" id="COG0509">
    <property type="taxonomic scope" value="Bacteria"/>
</dbReference>
<dbReference type="HOGENOM" id="CLU_097408_2_2_10"/>
<dbReference type="OrthoDB" id="9796712at2"/>
<dbReference type="GO" id="GO:0005829">
    <property type="term" value="C:cytosol"/>
    <property type="evidence" value="ECO:0007669"/>
    <property type="project" value="TreeGrafter"/>
</dbReference>
<dbReference type="GO" id="GO:0005960">
    <property type="term" value="C:glycine cleavage complex"/>
    <property type="evidence" value="ECO:0007669"/>
    <property type="project" value="InterPro"/>
</dbReference>
<dbReference type="GO" id="GO:0019464">
    <property type="term" value="P:glycine decarboxylation via glycine cleavage system"/>
    <property type="evidence" value="ECO:0007669"/>
    <property type="project" value="UniProtKB-UniRule"/>
</dbReference>
<dbReference type="CDD" id="cd06848">
    <property type="entry name" value="GCS_H"/>
    <property type="match status" value="1"/>
</dbReference>
<dbReference type="Gene3D" id="2.40.50.100">
    <property type="match status" value="1"/>
</dbReference>
<dbReference type="HAMAP" id="MF_00272">
    <property type="entry name" value="GcvH"/>
    <property type="match status" value="1"/>
</dbReference>
<dbReference type="InterPro" id="IPR003016">
    <property type="entry name" value="2-oxoA_DH_lipoyl-BS"/>
</dbReference>
<dbReference type="InterPro" id="IPR000089">
    <property type="entry name" value="Biotin_lipoyl"/>
</dbReference>
<dbReference type="InterPro" id="IPR002930">
    <property type="entry name" value="GCV_H"/>
</dbReference>
<dbReference type="InterPro" id="IPR033753">
    <property type="entry name" value="GCV_H/Fam206"/>
</dbReference>
<dbReference type="InterPro" id="IPR017453">
    <property type="entry name" value="GCV_H_sub"/>
</dbReference>
<dbReference type="InterPro" id="IPR011053">
    <property type="entry name" value="Single_hybrid_motif"/>
</dbReference>
<dbReference type="NCBIfam" id="TIGR00527">
    <property type="entry name" value="gcvH"/>
    <property type="match status" value="1"/>
</dbReference>
<dbReference type="NCBIfam" id="NF002270">
    <property type="entry name" value="PRK01202.1"/>
    <property type="match status" value="1"/>
</dbReference>
<dbReference type="PANTHER" id="PTHR11715">
    <property type="entry name" value="GLYCINE CLEAVAGE SYSTEM H PROTEIN"/>
    <property type="match status" value="1"/>
</dbReference>
<dbReference type="PANTHER" id="PTHR11715:SF3">
    <property type="entry name" value="GLYCINE CLEAVAGE SYSTEM H PROTEIN-RELATED"/>
    <property type="match status" value="1"/>
</dbReference>
<dbReference type="Pfam" id="PF01597">
    <property type="entry name" value="GCV_H"/>
    <property type="match status" value="1"/>
</dbReference>
<dbReference type="SUPFAM" id="SSF51230">
    <property type="entry name" value="Single hybrid motif"/>
    <property type="match status" value="1"/>
</dbReference>
<dbReference type="PROSITE" id="PS50968">
    <property type="entry name" value="BIOTINYL_LIPOYL"/>
    <property type="match status" value="1"/>
</dbReference>
<dbReference type="PROSITE" id="PS00189">
    <property type="entry name" value="LIPOYL"/>
    <property type="match status" value="1"/>
</dbReference>
<feature type="chain" id="PRO_1000078736" description="Glycine cleavage system H protein">
    <location>
        <begin position="1"/>
        <end position="127"/>
    </location>
</feature>
<feature type="domain" description="Lipoyl-binding" evidence="2">
    <location>
        <begin position="24"/>
        <end position="105"/>
    </location>
</feature>
<feature type="modified residue" description="N6-lipoyllysine" evidence="1">
    <location>
        <position position="65"/>
    </location>
</feature>
<evidence type="ECO:0000255" key="1">
    <source>
        <dbReference type="HAMAP-Rule" id="MF_00272"/>
    </source>
</evidence>
<evidence type="ECO:0000255" key="2">
    <source>
        <dbReference type="PROSITE-ProRule" id="PRU01066"/>
    </source>
</evidence>
<keyword id="KW-0450">Lipoyl</keyword>
<accession>A4SG07</accession>
<sequence length="127" mass="13489">MNVPGDLRYTKDHEWVKLLADGATALVGITDFAQSELGDIVFVELKPEGTVLGEQEIFGTVEAVKTVADLFAPVAGTILELNGVLDAAETVNQDPYGEGWMVKMKVADPSSLDALMDAAAYTEMIGG</sequence>
<comment type="function">
    <text evidence="1">The glycine cleavage system catalyzes the degradation of glycine. The H protein shuttles the methylamine group of glycine from the P protein to the T protein.</text>
</comment>
<comment type="cofactor">
    <cofactor evidence="1">
        <name>(R)-lipoate</name>
        <dbReference type="ChEBI" id="CHEBI:83088"/>
    </cofactor>
    <text evidence="1">Binds 1 lipoyl cofactor covalently.</text>
</comment>
<comment type="subunit">
    <text evidence="1">The glycine cleavage system is composed of four proteins: P, T, L and H.</text>
</comment>
<comment type="similarity">
    <text evidence="1">Belongs to the GcvH family.</text>
</comment>
<name>GCSH_CHLPM</name>
<organism>
    <name type="scientific">Chlorobium phaeovibrioides (strain DSM 265 / 1930)</name>
    <name type="common">Prosthecochloris vibrioformis (strain DSM 265)</name>
    <dbReference type="NCBI Taxonomy" id="290318"/>
    <lineage>
        <taxon>Bacteria</taxon>
        <taxon>Pseudomonadati</taxon>
        <taxon>Chlorobiota</taxon>
        <taxon>Chlorobiia</taxon>
        <taxon>Chlorobiales</taxon>
        <taxon>Chlorobiaceae</taxon>
        <taxon>Chlorobium/Pelodictyon group</taxon>
        <taxon>Chlorobium</taxon>
    </lineage>
</organism>
<proteinExistence type="inferred from homology"/>
<protein>
    <recommendedName>
        <fullName evidence="1">Glycine cleavage system H protein</fullName>
    </recommendedName>
</protein>
<reference key="1">
    <citation type="submission" date="2007-03" db="EMBL/GenBank/DDBJ databases">
        <title>Complete sequence of Prosthecochloris vibrioformis DSM 265.</title>
        <authorList>
            <consortium name="US DOE Joint Genome Institute"/>
            <person name="Copeland A."/>
            <person name="Lucas S."/>
            <person name="Lapidus A."/>
            <person name="Barry K."/>
            <person name="Detter J.C."/>
            <person name="Glavina del Rio T."/>
            <person name="Hammon N."/>
            <person name="Israni S."/>
            <person name="Pitluck S."/>
            <person name="Schmutz J."/>
            <person name="Larimer F."/>
            <person name="Land M."/>
            <person name="Hauser L."/>
            <person name="Mikhailova N."/>
            <person name="Li T."/>
            <person name="Overmann J."/>
            <person name="Schuster S.C."/>
            <person name="Bryant D.A."/>
            <person name="Richardson P."/>
        </authorList>
    </citation>
    <scope>NUCLEOTIDE SEQUENCE [LARGE SCALE GENOMIC DNA]</scope>
    <source>
        <strain>DSM 265 / 1930</strain>
    </source>
</reference>